<dbReference type="EMBL" id="KL659308">
    <property type="protein sequence ID" value="KFA70123.1"/>
    <property type="molecule type" value="Genomic_DNA"/>
</dbReference>
<dbReference type="SMR" id="A0A084R1N8"/>
<dbReference type="STRING" id="1283841.A0A084R1N8"/>
<dbReference type="HOGENOM" id="CLU_1908077_0_0_1"/>
<dbReference type="InParanoid" id="A0A084R1N8"/>
<dbReference type="OMA" id="ANEYMIT"/>
<dbReference type="OrthoDB" id="3758478at2759"/>
<dbReference type="Proteomes" id="UP000028524">
    <property type="component" value="Unassembled WGS sequence"/>
</dbReference>
<dbReference type="Gene3D" id="3.10.450.50">
    <property type="match status" value="1"/>
</dbReference>
<dbReference type="InterPro" id="IPR050977">
    <property type="entry name" value="Fungal_Meroterpenoid_Isomerase"/>
</dbReference>
<dbReference type="InterPro" id="IPR032710">
    <property type="entry name" value="NTF2-like_dom_sf"/>
</dbReference>
<dbReference type="PANTHER" id="PTHR39598:SF1">
    <property type="entry name" value="AUSTINOID BIOSYNTHESIS CLUSTERS PROTEIN F-RELATED"/>
    <property type="match status" value="1"/>
</dbReference>
<dbReference type="PANTHER" id="PTHR39598">
    <property type="entry name" value="AUSTINOL SYNTHESIS PROTEIN F-RELATED"/>
    <property type="match status" value="1"/>
</dbReference>
<dbReference type="SUPFAM" id="SSF54427">
    <property type="entry name" value="NTF2-like"/>
    <property type="match status" value="1"/>
</dbReference>
<organism>
    <name type="scientific">Stachybotrys chlorohalonatus (strain IBT 40285)</name>
    <dbReference type="NCBI Taxonomy" id="1283841"/>
    <lineage>
        <taxon>Eukaryota</taxon>
        <taxon>Fungi</taxon>
        <taxon>Dikarya</taxon>
        <taxon>Ascomycota</taxon>
        <taxon>Pezizomycotina</taxon>
        <taxon>Sordariomycetes</taxon>
        <taxon>Hypocreomycetidae</taxon>
        <taxon>Hypocreales</taxon>
        <taxon>Stachybotryaceae</taxon>
        <taxon>Stachybotrys</taxon>
    </lineage>
</organism>
<name>ATR11_STAC4</name>
<comment type="function">
    <text evidence="1 3">Part of the core atranone cluster (CAC) which products are predicted to catalyze most or all steps of mycotoxin atranone synthesis, starting from geranylgeranyl pyrophosphate (GGPP) (PubMed:25015739). The initial cyclization of GGPP to dolabellane is probably performed by the terpene cyclase ATR13 (PubMed:25015739). The Baeyer-Villiger oxidation near the end of the atranone synthesis, which converts atranones D and E to atranones F and G is predicted to be catalyzed by the monooxygenase ATR8 (PubMed:25015739). Of the CAC's other predicted gene products, the reducing PKS ATR6 might synthesize a polyketide chain (PubMed:25015739). This polyketide is probably transferred onto the atranone backbone by the polyketide transferase ATR5 (By similarity). Other predicted CAC products include 4 oxygenases (ATR2, ATR3, ATR4, and ATR14), 3 short-chain reductases (ATR7, ATR9, and ATR10), and a methyltransferase (ATR12) (PubMed:25015739). These may all be involved in the various steps of atranone biosynthesis, although their specific roles must await experimental determination (PubMed:25015739).</text>
</comment>
<comment type="pathway">
    <text evidence="3">Mycotoxin biosynthesis.</text>
</comment>
<keyword id="KW-1185">Reference proteome</keyword>
<evidence type="ECO:0000250" key="1">
    <source>
        <dbReference type="UniProtKB" id="Q4WAY4"/>
    </source>
</evidence>
<evidence type="ECO:0000303" key="2">
    <source>
    </source>
</evidence>
<evidence type="ECO:0000305" key="3">
    <source>
    </source>
</evidence>
<proteinExistence type="inferred from homology"/>
<sequence>MASRKATVQSIVESFNERDIDKMTAPVSKNFVYQLLPKSLERGPMDVAGFRGLFEATKSYFNNFKFEVVDTFEDSAADKMILWANVTSDTHVGKFATEVMLIFYFDTTGKIYKWIEWIDSAVGKEFEQKLQGQ</sequence>
<reference key="1">
    <citation type="journal article" date="2014" name="BMC Genomics">
        <title>Comparative genome sequencing reveals chemotype-specific gene clusters in the toxigenic black mold Stachybotrys.</title>
        <authorList>
            <person name="Semeiks J."/>
            <person name="Borek D."/>
            <person name="Otwinowski Z."/>
            <person name="Grishin N.V."/>
        </authorList>
    </citation>
    <scope>NUCLEOTIDE SEQUENCE [LARGE SCALE GENOMIC DNA]</scope>
    <scope>IDENTIFICATION</scope>
    <scope>FUNCTION</scope>
    <source>
        <strain>IBT 40285</strain>
    </source>
</reference>
<gene>
    <name evidence="2" type="primary">ATR11</name>
    <name type="ORF">S40285_10096</name>
</gene>
<accession>A0A084R1N8</accession>
<feature type="chain" id="PRO_0000442390" description="Core atranone cluster (CAC) protein 11">
    <location>
        <begin position="1"/>
        <end position="133"/>
    </location>
</feature>
<protein>
    <recommendedName>
        <fullName evidence="2">Core atranone cluster (CAC) protein 11</fullName>
    </recommendedName>
</protein>